<keyword id="KW-0479">Metal-binding</keyword>
<keyword id="KW-0520">NAD</keyword>
<keyword id="KW-0521">NADP</keyword>
<keyword id="KW-0558">Oxidation</keyword>
<keyword id="KW-0560">Oxidoreductase</keyword>
<keyword id="KW-0630">Potassium</keyword>
<keyword id="KW-1185">Reference proteome</keyword>
<name>BETB_RHILW</name>
<gene>
    <name evidence="1" type="primary">betB</name>
    <name type="ordered locus">Rleg2_0777</name>
</gene>
<protein>
    <recommendedName>
        <fullName evidence="1">Betaine aldehyde dehydrogenase</fullName>
        <shortName evidence="1">BADH</shortName>
        <ecNumber evidence="1">1.2.1.8</ecNumber>
    </recommendedName>
</protein>
<dbReference type="EC" id="1.2.1.8" evidence="1"/>
<dbReference type="EMBL" id="CP001191">
    <property type="protein sequence ID" value="ACI54072.1"/>
    <property type="molecule type" value="Genomic_DNA"/>
</dbReference>
<dbReference type="RefSeq" id="WP_012556954.1">
    <property type="nucleotide sequence ID" value="NC_011369.1"/>
</dbReference>
<dbReference type="SMR" id="B5ZUG3"/>
<dbReference type="STRING" id="395492.Rleg2_0777"/>
<dbReference type="KEGG" id="rlt:Rleg2_0777"/>
<dbReference type="eggNOG" id="COG1012">
    <property type="taxonomic scope" value="Bacteria"/>
</dbReference>
<dbReference type="HOGENOM" id="CLU_005391_0_0_5"/>
<dbReference type="UniPathway" id="UPA00529">
    <property type="reaction ID" value="UER00386"/>
</dbReference>
<dbReference type="Proteomes" id="UP000008330">
    <property type="component" value="Chromosome"/>
</dbReference>
<dbReference type="GO" id="GO:0008802">
    <property type="term" value="F:betaine-aldehyde dehydrogenase (NAD+) activity"/>
    <property type="evidence" value="ECO:0007669"/>
    <property type="project" value="UniProtKB-UniRule"/>
</dbReference>
<dbReference type="GO" id="GO:0046872">
    <property type="term" value="F:metal ion binding"/>
    <property type="evidence" value="ECO:0007669"/>
    <property type="project" value="UniProtKB-KW"/>
</dbReference>
<dbReference type="GO" id="GO:0019285">
    <property type="term" value="P:glycine betaine biosynthetic process from choline"/>
    <property type="evidence" value="ECO:0007669"/>
    <property type="project" value="UniProtKB-UniRule"/>
</dbReference>
<dbReference type="CDD" id="cd07090">
    <property type="entry name" value="ALDH_F9_TMBADH"/>
    <property type="match status" value="1"/>
</dbReference>
<dbReference type="FunFam" id="3.40.309.10:FF:000012">
    <property type="entry name" value="Betaine aldehyde dehydrogenase"/>
    <property type="match status" value="1"/>
</dbReference>
<dbReference type="FunFam" id="3.40.605.10:FF:000007">
    <property type="entry name" value="NAD/NADP-dependent betaine aldehyde dehydrogenase"/>
    <property type="match status" value="1"/>
</dbReference>
<dbReference type="Gene3D" id="3.40.605.10">
    <property type="entry name" value="Aldehyde Dehydrogenase, Chain A, domain 1"/>
    <property type="match status" value="1"/>
</dbReference>
<dbReference type="Gene3D" id="3.40.309.10">
    <property type="entry name" value="Aldehyde Dehydrogenase, Chain A, domain 2"/>
    <property type="match status" value="1"/>
</dbReference>
<dbReference type="HAMAP" id="MF_00804">
    <property type="entry name" value="BADH"/>
    <property type="match status" value="1"/>
</dbReference>
<dbReference type="InterPro" id="IPR016161">
    <property type="entry name" value="Ald_DH/histidinol_DH"/>
</dbReference>
<dbReference type="InterPro" id="IPR016163">
    <property type="entry name" value="Ald_DH_C"/>
</dbReference>
<dbReference type="InterPro" id="IPR016160">
    <property type="entry name" value="Ald_DH_CS_CYS"/>
</dbReference>
<dbReference type="InterPro" id="IPR029510">
    <property type="entry name" value="Ald_DH_CS_GLU"/>
</dbReference>
<dbReference type="InterPro" id="IPR016162">
    <property type="entry name" value="Ald_DH_N"/>
</dbReference>
<dbReference type="InterPro" id="IPR015590">
    <property type="entry name" value="Aldehyde_DH_dom"/>
</dbReference>
<dbReference type="InterPro" id="IPR011264">
    <property type="entry name" value="BADH"/>
</dbReference>
<dbReference type="NCBIfam" id="TIGR01804">
    <property type="entry name" value="BADH"/>
    <property type="match status" value="1"/>
</dbReference>
<dbReference type="NCBIfam" id="NF009725">
    <property type="entry name" value="PRK13252.1"/>
    <property type="match status" value="1"/>
</dbReference>
<dbReference type="PANTHER" id="PTHR11699">
    <property type="entry name" value="ALDEHYDE DEHYDROGENASE-RELATED"/>
    <property type="match status" value="1"/>
</dbReference>
<dbReference type="Pfam" id="PF00171">
    <property type="entry name" value="Aldedh"/>
    <property type="match status" value="1"/>
</dbReference>
<dbReference type="SUPFAM" id="SSF53720">
    <property type="entry name" value="ALDH-like"/>
    <property type="match status" value="1"/>
</dbReference>
<dbReference type="PROSITE" id="PS00070">
    <property type="entry name" value="ALDEHYDE_DEHYDR_CYS"/>
    <property type="match status" value="1"/>
</dbReference>
<dbReference type="PROSITE" id="PS00687">
    <property type="entry name" value="ALDEHYDE_DEHYDR_GLU"/>
    <property type="match status" value="1"/>
</dbReference>
<proteinExistence type="inferred from homology"/>
<organism>
    <name type="scientific">Rhizobium leguminosarum bv. trifolii (strain WSM2304)</name>
    <dbReference type="NCBI Taxonomy" id="395492"/>
    <lineage>
        <taxon>Bacteria</taxon>
        <taxon>Pseudomonadati</taxon>
        <taxon>Pseudomonadota</taxon>
        <taxon>Alphaproteobacteria</taxon>
        <taxon>Hyphomicrobiales</taxon>
        <taxon>Rhizobiaceae</taxon>
        <taxon>Rhizobium/Agrobacterium group</taxon>
        <taxon>Rhizobium</taxon>
    </lineage>
</organism>
<sequence>MKAQPKASHFIDGEYVEDTDGTVIESLYPATGEVIARLHAATPAIVEKAIAAARRAQPEWAAMSPMARGRILKRAADIMRERNRALSELETLDTGKPIQETIVADPTSGADAFEFFGGVAPAGLNGSHIPLGQDFAYTKRVPLGVCVGIGAWNYPQQIACWKAAPALISGNAMVFKPSENTPLGALKIAEILHEAGLPKGLFNVIQGDRDTGPLLVNHPDVAKVSLTGSVPTGRRVAAAAAGNLKHVTMELGGKSPLIVFDDADLDSAVGGAMLGNFYSTGQVCSNGTRVFVQKGIKTEFLKRLKARTEAMLIGDPLDEATQIGPMVSWAQREKVVAYIEKGKAEGATLVAGGGIPNNVSGEGYYIQPTVFADVTDDMTIAREEIFGPVMSVLDFDDEDEVIARANASEFGLSGGVFTADLSRAHRVVDRLEAGTLWINAYNLAPVEIPFGGSKQSGFGRENSLAALEHYSELKTVYVGMGPVQAPY</sequence>
<evidence type="ECO:0000255" key="1">
    <source>
        <dbReference type="HAMAP-Rule" id="MF_00804"/>
    </source>
</evidence>
<feature type="chain" id="PRO_1000133958" description="Betaine aldehyde dehydrogenase">
    <location>
        <begin position="1"/>
        <end position="487"/>
    </location>
</feature>
<feature type="active site" description="Charge relay system" evidence="1">
    <location>
        <position position="162"/>
    </location>
</feature>
<feature type="active site" description="Proton acceptor" evidence="1">
    <location>
        <position position="250"/>
    </location>
</feature>
<feature type="active site" description="Nucleophile" evidence="1">
    <location>
        <position position="284"/>
    </location>
</feature>
<feature type="active site" description="Charge relay system" evidence="1">
    <location>
        <position position="461"/>
    </location>
</feature>
<feature type="binding site" evidence="1">
    <location>
        <position position="26"/>
    </location>
    <ligand>
        <name>K(+)</name>
        <dbReference type="ChEBI" id="CHEBI:29103"/>
        <label>1</label>
    </ligand>
</feature>
<feature type="binding site" evidence="1">
    <location>
        <position position="93"/>
    </location>
    <ligand>
        <name>K(+)</name>
        <dbReference type="ChEBI" id="CHEBI:29103"/>
        <label>1</label>
    </ligand>
</feature>
<feature type="binding site" evidence="1">
    <location>
        <begin position="150"/>
        <end position="152"/>
    </location>
    <ligand>
        <name>NAD(+)</name>
        <dbReference type="ChEBI" id="CHEBI:57540"/>
    </ligand>
</feature>
<feature type="binding site" evidence="1">
    <location>
        <begin position="176"/>
        <end position="179"/>
    </location>
    <ligand>
        <name>NAD(+)</name>
        <dbReference type="ChEBI" id="CHEBI:57540"/>
    </ligand>
</feature>
<feature type="binding site" evidence="1">
    <location>
        <begin position="229"/>
        <end position="232"/>
    </location>
    <ligand>
        <name>NAD(+)</name>
        <dbReference type="ChEBI" id="CHEBI:57540"/>
    </ligand>
</feature>
<feature type="binding site" evidence="1">
    <location>
        <position position="244"/>
    </location>
    <ligand>
        <name>K(+)</name>
        <dbReference type="ChEBI" id="CHEBI:29103"/>
        <label>2</label>
    </ligand>
</feature>
<feature type="binding site" evidence="1">
    <location>
        <position position="252"/>
    </location>
    <ligand>
        <name>NAD(+)</name>
        <dbReference type="ChEBI" id="CHEBI:57540"/>
    </ligand>
</feature>
<feature type="binding site" description="covalent" evidence="1">
    <location>
        <position position="284"/>
    </location>
    <ligand>
        <name>NAD(+)</name>
        <dbReference type="ChEBI" id="CHEBI:57540"/>
    </ligand>
</feature>
<feature type="binding site" evidence="1">
    <location>
        <position position="384"/>
    </location>
    <ligand>
        <name>NAD(+)</name>
        <dbReference type="ChEBI" id="CHEBI:57540"/>
    </ligand>
</feature>
<feature type="binding site" evidence="1">
    <location>
        <position position="454"/>
    </location>
    <ligand>
        <name>K(+)</name>
        <dbReference type="ChEBI" id="CHEBI:29103"/>
        <label>2</label>
    </ligand>
</feature>
<feature type="binding site" evidence="1">
    <location>
        <position position="457"/>
    </location>
    <ligand>
        <name>K(+)</name>
        <dbReference type="ChEBI" id="CHEBI:29103"/>
        <label>2</label>
    </ligand>
</feature>
<feature type="modified residue" description="Cysteine sulfenic acid (-SOH)" evidence="1">
    <location>
        <position position="284"/>
    </location>
</feature>
<comment type="function">
    <text evidence="1">Involved in the biosynthesis of the osmoprotectant glycine betaine. Catalyzes the irreversible oxidation of betaine aldehyde to the corresponding acid.</text>
</comment>
<comment type="catalytic activity">
    <reaction evidence="1">
        <text>betaine aldehyde + NAD(+) + H2O = glycine betaine + NADH + 2 H(+)</text>
        <dbReference type="Rhea" id="RHEA:15305"/>
        <dbReference type="ChEBI" id="CHEBI:15377"/>
        <dbReference type="ChEBI" id="CHEBI:15378"/>
        <dbReference type="ChEBI" id="CHEBI:15710"/>
        <dbReference type="ChEBI" id="CHEBI:17750"/>
        <dbReference type="ChEBI" id="CHEBI:57540"/>
        <dbReference type="ChEBI" id="CHEBI:57945"/>
        <dbReference type="EC" id="1.2.1.8"/>
    </reaction>
    <physiologicalReaction direction="left-to-right" evidence="1">
        <dbReference type="Rhea" id="RHEA:15306"/>
    </physiologicalReaction>
</comment>
<comment type="cofactor">
    <cofactor evidence="1">
        <name>K(+)</name>
        <dbReference type="ChEBI" id="CHEBI:29103"/>
    </cofactor>
    <text evidence="1">Binds 2 potassium ions per subunit.</text>
</comment>
<comment type="pathway">
    <text evidence="1">Amine and polyamine biosynthesis; betaine biosynthesis via choline pathway; betaine from betaine aldehyde: step 1/1.</text>
</comment>
<comment type="subunit">
    <text evidence="1">Dimer of dimers.</text>
</comment>
<comment type="similarity">
    <text evidence="1">Belongs to the aldehyde dehydrogenase family.</text>
</comment>
<accession>B5ZUG3</accession>
<reference key="1">
    <citation type="journal article" date="2010" name="Stand. Genomic Sci.">
        <title>Complete genome sequence of Rhizobium leguminosarum bv trifolii strain WSM2304, an effective microsymbiont of the South American clover Trifolium polymorphum.</title>
        <authorList>
            <person name="Reeve W."/>
            <person name="O'Hara G."/>
            <person name="Chain P."/>
            <person name="Ardley J."/>
            <person name="Brau L."/>
            <person name="Nandesena K."/>
            <person name="Tiwari R."/>
            <person name="Malfatti S."/>
            <person name="Kiss H."/>
            <person name="Lapidus A."/>
            <person name="Copeland A."/>
            <person name="Nolan M."/>
            <person name="Land M."/>
            <person name="Ivanova N."/>
            <person name="Mavromatis K."/>
            <person name="Markowitz V."/>
            <person name="Kyrpides N."/>
            <person name="Melino V."/>
            <person name="Denton M."/>
            <person name="Yates R."/>
            <person name="Howieson J."/>
        </authorList>
    </citation>
    <scope>NUCLEOTIDE SEQUENCE [LARGE SCALE GENOMIC DNA]</scope>
    <source>
        <strain>WSM2304</strain>
    </source>
</reference>